<accession>A5F5I8</accession>
<accession>C3M4U3</accession>
<feature type="chain" id="PRO_1000200859" description="23S rRNA (uracil(1939)-C(5))-methyltransferase RlmD">
    <location>
        <begin position="1"/>
        <end position="440"/>
    </location>
</feature>
<feature type="domain" description="TRAM" evidence="1">
    <location>
        <begin position="11"/>
        <end position="69"/>
    </location>
</feature>
<feature type="active site" description="Nucleophile" evidence="1">
    <location>
        <position position="396"/>
    </location>
</feature>
<feature type="binding site" evidence="1">
    <location>
        <position position="82"/>
    </location>
    <ligand>
        <name>[4Fe-4S] cluster</name>
        <dbReference type="ChEBI" id="CHEBI:49883"/>
    </ligand>
</feature>
<feature type="binding site" evidence="1">
    <location>
        <position position="88"/>
    </location>
    <ligand>
        <name>[4Fe-4S] cluster</name>
        <dbReference type="ChEBI" id="CHEBI:49883"/>
    </ligand>
</feature>
<feature type="binding site" evidence="1">
    <location>
        <position position="91"/>
    </location>
    <ligand>
        <name>[4Fe-4S] cluster</name>
        <dbReference type="ChEBI" id="CHEBI:49883"/>
    </ligand>
</feature>
<feature type="binding site" evidence="1">
    <location>
        <position position="169"/>
    </location>
    <ligand>
        <name>[4Fe-4S] cluster</name>
        <dbReference type="ChEBI" id="CHEBI:49883"/>
    </ligand>
</feature>
<feature type="binding site" evidence="1">
    <location>
        <position position="272"/>
    </location>
    <ligand>
        <name>S-adenosyl-L-methionine</name>
        <dbReference type="ChEBI" id="CHEBI:59789"/>
    </ligand>
</feature>
<feature type="binding site" evidence="1">
    <location>
        <position position="301"/>
    </location>
    <ligand>
        <name>S-adenosyl-L-methionine</name>
        <dbReference type="ChEBI" id="CHEBI:59789"/>
    </ligand>
</feature>
<feature type="binding site" evidence="1">
    <location>
        <position position="306"/>
    </location>
    <ligand>
        <name>S-adenosyl-L-methionine</name>
        <dbReference type="ChEBI" id="CHEBI:59789"/>
    </ligand>
</feature>
<feature type="binding site" evidence="1">
    <location>
        <position position="322"/>
    </location>
    <ligand>
        <name>S-adenosyl-L-methionine</name>
        <dbReference type="ChEBI" id="CHEBI:59789"/>
    </ligand>
</feature>
<feature type="binding site" evidence="1">
    <location>
        <position position="349"/>
    </location>
    <ligand>
        <name>S-adenosyl-L-methionine</name>
        <dbReference type="ChEBI" id="CHEBI:59789"/>
    </ligand>
</feature>
<feature type="binding site" evidence="1">
    <location>
        <position position="370"/>
    </location>
    <ligand>
        <name>S-adenosyl-L-methionine</name>
        <dbReference type="ChEBI" id="CHEBI:59789"/>
    </ligand>
</feature>
<name>RLMD_VIBC3</name>
<reference key="1">
    <citation type="submission" date="2007-03" db="EMBL/GenBank/DDBJ databases">
        <authorList>
            <person name="Heidelberg J."/>
        </authorList>
    </citation>
    <scope>NUCLEOTIDE SEQUENCE [LARGE SCALE GENOMIC DNA]</scope>
    <source>
        <strain>ATCC 39541 / Classical Ogawa 395 / O395</strain>
    </source>
</reference>
<reference key="2">
    <citation type="journal article" date="2008" name="PLoS ONE">
        <title>A recalibrated molecular clock and independent origins for the cholera pandemic clones.</title>
        <authorList>
            <person name="Feng L."/>
            <person name="Reeves P.R."/>
            <person name="Lan R."/>
            <person name="Ren Y."/>
            <person name="Gao C."/>
            <person name="Zhou Z."/>
            <person name="Ren Y."/>
            <person name="Cheng J."/>
            <person name="Wang W."/>
            <person name="Wang J."/>
            <person name="Qian W."/>
            <person name="Li D."/>
            <person name="Wang L."/>
        </authorList>
    </citation>
    <scope>NUCLEOTIDE SEQUENCE [LARGE SCALE GENOMIC DNA]</scope>
    <source>
        <strain>ATCC 39541 / Classical Ogawa 395 / O395</strain>
    </source>
</reference>
<comment type="function">
    <text evidence="1">Catalyzes the formation of 5-methyl-uridine at position 1939 (m5U1939) in 23S rRNA.</text>
</comment>
<comment type="catalytic activity">
    <reaction evidence="1">
        <text>uridine(1939) in 23S rRNA + S-adenosyl-L-methionine = 5-methyluridine(1939) in 23S rRNA + S-adenosyl-L-homocysteine + H(+)</text>
        <dbReference type="Rhea" id="RHEA:42908"/>
        <dbReference type="Rhea" id="RHEA-COMP:10278"/>
        <dbReference type="Rhea" id="RHEA-COMP:10279"/>
        <dbReference type="ChEBI" id="CHEBI:15378"/>
        <dbReference type="ChEBI" id="CHEBI:57856"/>
        <dbReference type="ChEBI" id="CHEBI:59789"/>
        <dbReference type="ChEBI" id="CHEBI:65315"/>
        <dbReference type="ChEBI" id="CHEBI:74447"/>
        <dbReference type="EC" id="2.1.1.190"/>
    </reaction>
</comment>
<comment type="similarity">
    <text evidence="1">Belongs to the class I-like SAM-binding methyltransferase superfamily. RNA M5U methyltransferase family. RlmD subfamily.</text>
</comment>
<evidence type="ECO:0000255" key="1">
    <source>
        <dbReference type="HAMAP-Rule" id="MF_01010"/>
    </source>
</evidence>
<dbReference type="EC" id="2.1.1.190" evidence="1"/>
<dbReference type="EMBL" id="CP000627">
    <property type="protein sequence ID" value="ABQ21286.1"/>
    <property type="molecule type" value="Genomic_DNA"/>
</dbReference>
<dbReference type="EMBL" id="CP001235">
    <property type="protein sequence ID" value="ACP10554.1"/>
    <property type="molecule type" value="Genomic_DNA"/>
</dbReference>
<dbReference type="RefSeq" id="WP_000090453.1">
    <property type="nucleotide sequence ID" value="NZ_JAACZH010000010.1"/>
</dbReference>
<dbReference type="SMR" id="A5F5I8"/>
<dbReference type="KEGG" id="vco:VC0395_A2030"/>
<dbReference type="KEGG" id="vcr:VC395_2567"/>
<dbReference type="PATRIC" id="fig|345073.21.peg.2472"/>
<dbReference type="eggNOG" id="COG2265">
    <property type="taxonomic scope" value="Bacteria"/>
</dbReference>
<dbReference type="HOGENOM" id="CLU_014689_8_2_6"/>
<dbReference type="OrthoDB" id="9804590at2"/>
<dbReference type="Proteomes" id="UP000000249">
    <property type="component" value="Chromosome 2"/>
</dbReference>
<dbReference type="GO" id="GO:0051539">
    <property type="term" value="F:4 iron, 4 sulfur cluster binding"/>
    <property type="evidence" value="ECO:0007669"/>
    <property type="project" value="UniProtKB-KW"/>
</dbReference>
<dbReference type="GO" id="GO:0005506">
    <property type="term" value="F:iron ion binding"/>
    <property type="evidence" value="ECO:0007669"/>
    <property type="project" value="UniProtKB-UniRule"/>
</dbReference>
<dbReference type="GO" id="GO:0003723">
    <property type="term" value="F:RNA binding"/>
    <property type="evidence" value="ECO:0007669"/>
    <property type="project" value="InterPro"/>
</dbReference>
<dbReference type="GO" id="GO:0070041">
    <property type="term" value="F:rRNA (uridine-C5-)-methyltransferase activity"/>
    <property type="evidence" value="ECO:0007669"/>
    <property type="project" value="UniProtKB-UniRule"/>
</dbReference>
<dbReference type="GO" id="GO:0070475">
    <property type="term" value="P:rRNA base methylation"/>
    <property type="evidence" value="ECO:0007669"/>
    <property type="project" value="TreeGrafter"/>
</dbReference>
<dbReference type="CDD" id="cd02440">
    <property type="entry name" value="AdoMet_MTases"/>
    <property type="match status" value="1"/>
</dbReference>
<dbReference type="FunFam" id="3.40.50.150:FF:000009">
    <property type="entry name" value="23S rRNA (Uracil(1939)-C(5))-methyltransferase RlmD"/>
    <property type="match status" value="1"/>
</dbReference>
<dbReference type="FunFam" id="2.40.50.1070:FF:000004">
    <property type="entry name" value="23S rRNA (uracil(1939)-C(5))-methyltransferase RlmD"/>
    <property type="match status" value="1"/>
</dbReference>
<dbReference type="FunFam" id="2.40.50.140:FF:000097">
    <property type="entry name" value="23S rRNA (uracil(1939)-C(5))-methyltransferase RlmD"/>
    <property type="match status" value="1"/>
</dbReference>
<dbReference type="Gene3D" id="2.40.50.1070">
    <property type="match status" value="1"/>
</dbReference>
<dbReference type="Gene3D" id="2.40.50.140">
    <property type="entry name" value="Nucleic acid-binding proteins"/>
    <property type="match status" value="1"/>
</dbReference>
<dbReference type="Gene3D" id="3.40.50.150">
    <property type="entry name" value="Vaccinia Virus protein VP39"/>
    <property type="match status" value="1"/>
</dbReference>
<dbReference type="HAMAP" id="MF_01010">
    <property type="entry name" value="23SrRNA_methyltr_RlmD"/>
    <property type="match status" value="1"/>
</dbReference>
<dbReference type="InterPro" id="IPR001566">
    <property type="entry name" value="23S_rRNA_MeTrfase_RlmD"/>
</dbReference>
<dbReference type="InterPro" id="IPR030390">
    <property type="entry name" value="MeTrfase_TrmA_AS"/>
</dbReference>
<dbReference type="InterPro" id="IPR030391">
    <property type="entry name" value="MeTrfase_TrmA_CS"/>
</dbReference>
<dbReference type="InterPro" id="IPR012340">
    <property type="entry name" value="NA-bd_OB-fold"/>
</dbReference>
<dbReference type="InterPro" id="IPR029063">
    <property type="entry name" value="SAM-dependent_MTases_sf"/>
</dbReference>
<dbReference type="InterPro" id="IPR002792">
    <property type="entry name" value="TRAM_dom"/>
</dbReference>
<dbReference type="InterPro" id="IPR010280">
    <property type="entry name" value="U5_MeTrfase_fam"/>
</dbReference>
<dbReference type="NCBIfam" id="NF009639">
    <property type="entry name" value="PRK13168.1"/>
    <property type="match status" value="1"/>
</dbReference>
<dbReference type="NCBIfam" id="TIGR00479">
    <property type="entry name" value="rumA"/>
    <property type="match status" value="1"/>
</dbReference>
<dbReference type="PANTHER" id="PTHR11061:SF49">
    <property type="entry name" value="23S RRNA (URACIL(1939)-C(5))-METHYLTRANSFERASE RLMD"/>
    <property type="match status" value="1"/>
</dbReference>
<dbReference type="PANTHER" id="PTHR11061">
    <property type="entry name" value="RNA M5U METHYLTRANSFERASE"/>
    <property type="match status" value="1"/>
</dbReference>
<dbReference type="Pfam" id="PF01938">
    <property type="entry name" value="TRAM"/>
    <property type="match status" value="1"/>
</dbReference>
<dbReference type="Pfam" id="PF05958">
    <property type="entry name" value="tRNA_U5-meth_tr"/>
    <property type="match status" value="1"/>
</dbReference>
<dbReference type="SUPFAM" id="SSF50249">
    <property type="entry name" value="Nucleic acid-binding proteins"/>
    <property type="match status" value="1"/>
</dbReference>
<dbReference type="SUPFAM" id="SSF53335">
    <property type="entry name" value="S-adenosyl-L-methionine-dependent methyltransferases"/>
    <property type="match status" value="1"/>
</dbReference>
<dbReference type="PROSITE" id="PS51687">
    <property type="entry name" value="SAM_MT_RNA_M5U"/>
    <property type="match status" value="1"/>
</dbReference>
<dbReference type="PROSITE" id="PS50926">
    <property type="entry name" value="TRAM"/>
    <property type="match status" value="1"/>
</dbReference>
<dbReference type="PROSITE" id="PS01230">
    <property type="entry name" value="TRMA_1"/>
    <property type="match status" value="1"/>
</dbReference>
<dbReference type="PROSITE" id="PS01231">
    <property type="entry name" value="TRMA_2"/>
    <property type="match status" value="1"/>
</dbReference>
<sequence length="440" mass="48939">MARFFQPKKHSTLDTKHQPVTIERLDHQGSGLAFLHKKPLFVDGALPGEEVLIQLTENKSKYARGQLIKVLKPSAERVAPFCAHYAQCGGCDLQHLDRAGQIHHKQQALSQLMVKFAGQSLALSAPVCSDDQGYRRRARLSLMWDKKTQQLQLGFRRKQSKAIVNVTDCPVLEPSLNALLPDLNALLSEWSQPERLGHVELVKGDNTRVLVLRHLGALIEQDQQRLTDFASQNQLTLYLMLEAGELQHVQGEAPYCEETGSRLSFLPSHFIQVNRAVNQHMVAQALNWLEVSPQEHVLDLFCGLGNFTLPLAKQAQAVVGVEGVDEMVQHATHNAKLNQINNVAFYQANLEQDMTSASWAQQKFAKVLLDPARAGAEGIVDQLSALGAKRVVYVSCNPATLARDSQSLLSQGFRLEKLGMLDMFPHTSHLESMALFVKKG</sequence>
<organism>
    <name type="scientific">Vibrio cholerae serotype O1 (strain ATCC 39541 / Classical Ogawa 395 / O395)</name>
    <dbReference type="NCBI Taxonomy" id="345073"/>
    <lineage>
        <taxon>Bacteria</taxon>
        <taxon>Pseudomonadati</taxon>
        <taxon>Pseudomonadota</taxon>
        <taxon>Gammaproteobacteria</taxon>
        <taxon>Vibrionales</taxon>
        <taxon>Vibrionaceae</taxon>
        <taxon>Vibrio</taxon>
    </lineage>
</organism>
<keyword id="KW-0004">4Fe-4S</keyword>
<keyword id="KW-0408">Iron</keyword>
<keyword id="KW-0411">Iron-sulfur</keyword>
<keyword id="KW-0479">Metal-binding</keyword>
<keyword id="KW-0489">Methyltransferase</keyword>
<keyword id="KW-0698">rRNA processing</keyword>
<keyword id="KW-0949">S-adenosyl-L-methionine</keyword>
<keyword id="KW-0808">Transferase</keyword>
<gene>
    <name evidence="1" type="primary">rlmD</name>
    <name type="synonym">rumA</name>
    <name type="ordered locus">VC0395_A2030</name>
    <name type="ordered locus">VC395_2567</name>
</gene>
<proteinExistence type="inferred from homology"/>
<protein>
    <recommendedName>
        <fullName evidence="1">23S rRNA (uracil(1939)-C(5))-methyltransferase RlmD</fullName>
        <ecNumber evidence="1">2.1.1.190</ecNumber>
    </recommendedName>
    <alternativeName>
        <fullName evidence="1">23S rRNA(m5U1939)-methyltransferase</fullName>
    </alternativeName>
</protein>